<keyword id="KW-0106">Calcium</keyword>
<keyword id="KW-0903">Direct protein sequencing</keyword>
<keyword id="KW-1015">Disulfide bond</keyword>
<keyword id="KW-0378">Hydrolase</keyword>
<keyword id="KW-0442">Lipid degradation</keyword>
<keyword id="KW-0443">Lipid metabolism</keyword>
<keyword id="KW-0479">Metal-binding</keyword>
<keyword id="KW-0959">Myotoxin</keyword>
<keyword id="KW-0528">Neurotoxin</keyword>
<keyword id="KW-0964">Secreted</keyword>
<keyword id="KW-0800">Toxin</keyword>
<comment type="function">
    <text evidence="4">Snake venom phospholipase A2 (PLA2) that blocks neuromuscular transmission, but that does not produce blockade by virtue of a selective action on nerve endings. Instead, the toxin acts both on nerve and on muscle. PLA2 catalyzes the calcium-dependent hydrolysis of the 2-acyl groups in 3-sn-phosphoglycerides.</text>
</comment>
<comment type="catalytic activity">
    <reaction evidence="2 3">
        <text>a 1,2-diacyl-sn-glycero-3-phosphocholine + H2O = a 1-acyl-sn-glycero-3-phosphocholine + a fatty acid + H(+)</text>
        <dbReference type="Rhea" id="RHEA:15801"/>
        <dbReference type="ChEBI" id="CHEBI:15377"/>
        <dbReference type="ChEBI" id="CHEBI:15378"/>
        <dbReference type="ChEBI" id="CHEBI:28868"/>
        <dbReference type="ChEBI" id="CHEBI:57643"/>
        <dbReference type="ChEBI" id="CHEBI:58168"/>
        <dbReference type="EC" id="3.1.1.4"/>
    </reaction>
</comment>
<comment type="cofactor">
    <cofactor evidence="1">
        <name>Ca(2+)</name>
        <dbReference type="ChEBI" id="CHEBI:29108"/>
    </cofactor>
    <text evidence="1">Binds 1 Ca(2+) ion.</text>
</comment>
<comment type="subcellular location">
    <subcellularLocation>
        <location>Secreted</location>
    </subcellularLocation>
</comment>
<comment type="tissue specificity">
    <text>Expressed by the venom gland.</text>
</comment>
<comment type="PTM">
    <text>No glycosylation was detected on this protein.</text>
</comment>
<comment type="similarity">
    <text evidence="5">Belongs to the phospholipase A2 family. Group I subfamily. D49 sub-subfamily.</text>
</comment>
<name>PA2AE_NOTSC</name>
<reference key="1">
    <citation type="journal article" date="1995" name="Arch. Biochem. Biophys.">
        <title>Amino acid sequence of a new type of toxic phospholipase A2 from the venom of the Australian tiger snake (Notechis scutatus scutatus).</title>
        <authorList>
            <person name="Francis B."/>
            <person name="Coffield J.A."/>
            <person name="Simpson L.L."/>
            <person name="Kaiser I.I."/>
        </authorList>
    </citation>
    <scope>PROTEIN SEQUENCE</scope>
    <scope>FUNCTION</scope>
    <source>
        <tissue>Venom</tissue>
    </source>
</reference>
<feature type="chain" id="PRO_0000161677" description="Acidic phospholipase A2 HTe">
    <location>
        <begin position="1"/>
        <end position="125"/>
    </location>
</feature>
<feature type="active site" evidence="1">
    <location>
        <position position="48"/>
    </location>
</feature>
<feature type="active site" evidence="1">
    <location>
        <position position="99"/>
    </location>
</feature>
<feature type="binding site" evidence="1">
    <location>
        <position position="28"/>
    </location>
    <ligand>
        <name>Ca(2+)</name>
        <dbReference type="ChEBI" id="CHEBI:29108"/>
    </ligand>
</feature>
<feature type="binding site" evidence="1">
    <location>
        <position position="30"/>
    </location>
    <ligand>
        <name>Ca(2+)</name>
        <dbReference type="ChEBI" id="CHEBI:29108"/>
    </ligand>
</feature>
<feature type="binding site" evidence="1">
    <location>
        <position position="32"/>
    </location>
    <ligand>
        <name>Ca(2+)</name>
        <dbReference type="ChEBI" id="CHEBI:29108"/>
    </ligand>
</feature>
<feature type="binding site" evidence="1">
    <location>
        <position position="49"/>
    </location>
    <ligand>
        <name>Ca(2+)</name>
        <dbReference type="ChEBI" id="CHEBI:29108"/>
    </ligand>
</feature>
<feature type="disulfide bond" evidence="1">
    <location>
        <begin position="11"/>
        <end position="77"/>
    </location>
</feature>
<feature type="disulfide bond" evidence="1">
    <location>
        <begin position="27"/>
        <end position="124"/>
    </location>
</feature>
<feature type="disulfide bond" evidence="1">
    <location>
        <begin position="29"/>
        <end position="45"/>
    </location>
</feature>
<feature type="disulfide bond" evidence="1">
    <location>
        <begin position="44"/>
        <end position="105"/>
    </location>
</feature>
<feature type="disulfide bond" evidence="1">
    <location>
        <begin position="51"/>
        <end position="98"/>
    </location>
</feature>
<feature type="disulfide bond" evidence="1">
    <location>
        <begin position="61"/>
        <end position="91"/>
    </location>
</feature>
<feature type="disulfide bond" evidence="1">
    <location>
        <begin position="84"/>
        <end position="96"/>
    </location>
</feature>
<evidence type="ECO:0000250" key="1"/>
<evidence type="ECO:0000255" key="2">
    <source>
        <dbReference type="PROSITE-ProRule" id="PRU10035"/>
    </source>
</evidence>
<evidence type="ECO:0000255" key="3">
    <source>
        <dbReference type="PROSITE-ProRule" id="PRU10036"/>
    </source>
</evidence>
<evidence type="ECO:0000269" key="4">
    <source>
    </source>
</evidence>
<evidence type="ECO:0000305" key="5"/>
<organism>
    <name type="scientific">Notechis scutatus scutatus</name>
    <name type="common">Mainland tiger snake</name>
    <name type="synonym">Common tiger snake</name>
    <dbReference type="NCBI Taxonomy" id="70142"/>
    <lineage>
        <taxon>Eukaryota</taxon>
        <taxon>Metazoa</taxon>
        <taxon>Chordata</taxon>
        <taxon>Craniata</taxon>
        <taxon>Vertebrata</taxon>
        <taxon>Euteleostomi</taxon>
        <taxon>Lepidosauria</taxon>
        <taxon>Squamata</taxon>
        <taxon>Bifurcata</taxon>
        <taxon>Unidentata</taxon>
        <taxon>Episquamata</taxon>
        <taxon>Toxicofera</taxon>
        <taxon>Serpentes</taxon>
        <taxon>Colubroidea</taxon>
        <taxon>Elapidae</taxon>
        <taxon>Hydrophiinae</taxon>
        <taxon>Notechis</taxon>
    </lineage>
</organism>
<accession>Q9PSN5</accession>
<protein>
    <recommendedName>
        <fullName>Acidic phospholipase A2 HTe</fullName>
        <shortName>svPLA2</shortName>
        <ecNumber>3.1.1.4</ecNumber>
    </recommendedName>
    <alternativeName>
        <fullName>Phosphatidylcholine 2-acylhydrolase</fullName>
    </alternativeName>
</protein>
<proteinExistence type="evidence at protein level"/>
<dbReference type="EC" id="3.1.1.4"/>
<dbReference type="PIR" id="S65624">
    <property type="entry name" value="S65624"/>
</dbReference>
<dbReference type="SMR" id="Q9PSN5"/>
<dbReference type="GO" id="GO:0005576">
    <property type="term" value="C:extracellular region"/>
    <property type="evidence" value="ECO:0007669"/>
    <property type="project" value="UniProtKB-SubCell"/>
</dbReference>
<dbReference type="GO" id="GO:0005509">
    <property type="term" value="F:calcium ion binding"/>
    <property type="evidence" value="ECO:0007669"/>
    <property type="project" value="InterPro"/>
</dbReference>
<dbReference type="GO" id="GO:0047498">
    <property type="term" value="F:calcium-dependent phospholipase A2 activity"/>
    <property type="evidence" value="ECO:0007669"/>
    <property type="project" value="TreeGrafter"/>
</dbReference>
<dbReference type="GO" id="GO:0005543">
    <property type="term" value="F:phospholipid binding"/>
    <property type="evidence" value="ECO:0007669"/>
    <property type="project" value="TreeGrafter"/>
</dbReference>
<dbReference type="GO" id="GO:0005102">
    <property type="term" value="F:signaling receptor binding"/>
    <property type="evidence" value="ECO:0007669"/>
    <property type="project" value="TreeGrafter"/>
</dbReference>
<dbReference type="GO" id="GO:0090729">
    <property type="term" value="F:toxin activity"/>
    <property type="evidence" value="ECO:0007669"/>
    <property type="project" value="UniProtKB-KW"/>
</dbReference>
<dbReference type="GO" id="GO:0050482">
    <property type="term" value="P:arachidonate secretion"/>
    <property type="evidence" value="ECO:0007669"/>
    <property type="project" value="InterPro"/>
</dbReference>
<dbReference type="GO" id="GO:0006633">
    <property type="term" value="P:fatty acid biosynthetic process"/>
    <property type="evidence" value="ECO:0007669"/>
    <property type="project" value="TreeGrafter"/>
</dbReference>
<dbReference type="GO" id="GO:0016042">
    <property type="term" value="P:lipid catabolic process"/>
    <property type="evidence" value="ECO:0007669"/>
    <property type="project" value="UniProtKB-KW"/>
</dbReference>
<dbReference type="GO" id="GO:0006644">
    <property type="term" value="P:phospholipid metabolic process"/>
    <property type="evidence" value="ECO:0007669"/>
    <property type="project" value="InterPro"/>
</dbReference>
<dbReference type="GO" id="GO:0048146">
    <property type="term" value="P:positive regulation of fibroblast proliferation"/>
    <property type="evidence" value="ECO:0007669"/>
    <property type="project" value="TreeGrafter"/>
</dbReference>
<dbReference type="CDD" id="cd00125">
    <property type="entry name" value="PLA2c"/>
    <property type="match status" value="1"/>
</dbReference>
<dbReference type="FunFam" id="1.20.90.10:FF:000007">
    <property type="entry name" value="Acidic phospholipase A2"/>
    <property type="match status" value="1"/>
</dbReference>
<dbReference type="Gene3D" id="1.20.90.10">
    <property type="entry name" value="Phospholipase A2 domain"/>
    <property type="match status" value="1"/>
</dbReference>
<dbReference type="InterPro" id="IPR001211">
    <property type="entry name" value="PLipase_A2"/>
</dbReference>
<dbReference type="InterPro" id="IPR033112">
    <property type="entry name" value="PLipase_A2_Asp_AS"/>
</dbReference>
<dbReference type="InterPro" id="IPR016090">
    <property type="entry name" value="PLipase_A2_dom"/>
</dbReference>
<dbReference type="InterPro" id="IPR036444">
    <property type="entry name" value="PLipase_A2_dom_sf"/>
</dbReference>
<dbReference type="InterPro" id="IPR033113">
    <property type="entry name" value="PLipase_A2_His_AS"/>
</dbReference>
<dbReference type="PANTHER" id="PTHR11716:SF94">
    <property type="entry name" value="PHOSPHOLIPASE A2"/>
    <property type="match status" value="1"/>
</dbReference>
<dbReference type="PANTHER" id="PTHR11716">
    <property type="entry name" value="PHOSPHOLIPASE A2 FAMILY MEMBER"/>
    <property type="match status" value="1"/>
</dbReference>
<dbReference type="Pfam" id="PF00068">
    <property type="entry name" value="Phospholip_A2_1"/>
    <property type="match status" value="1"/>
</dbReference>
<dbReference type="PRINTS" id="PR00389">
    <property type="entry name" value="PHPHLIPASEA2"/>
</dbReference>
<dbReference type="SMART" id="SM00085">
    <property type="entry name" value="PA2c"/>
    <property type="match status" value="1"/>
</dbReference>
<dbReference type="SUPFAM" id="SSF48619">
    <property type="entry name" value="Phospholipase A2, PLA2"/>
    <property type="match status" value="1"/>
</dbReference>
<dbReference type="PROSITE" id="PS00119">
    <property type="entry name" value="PA2_ASP"/>
    <property type="match status" value="1"/>
</dbReference>
<dbReference type="PROSITE" id="PS00118">
    <property type="entry name" value="PA2_HIS"/>
    <property type="match status" value="1"/>
</dbReference>
<sequence length="125" mass="14262">NLYQFGNMIQCANHGRRPTRHYMDYGCYCGKGGSGTPVDELDRCCQTHDDCYGEAEKLPACNYMMSGPYYNTYSYECNEGELTCKDNNDECKAFICNCDRTAAICFARAPYNDANWNIDTKTRCQ</sequence>